<protein>
    <recommendedName>
        <fullName evidence="3">Conotoxin reg6(gamma)</fullName>
    </recommendedName>
</protein>
<keyword id="KW-0903">Direct protein sequencing</keyword>
<keyword id="KW-0301">Gamma-carboxyglutamic acid</keyword>
<keyword id="KW-0379">Hydroxylation</keyword>
<keyword id="KW-0964">Secreted</keyword>
<name>C6G_CONRE</name>
<sequence length="26" mass="2911">RVLEPGXEDPDVGEPAGEYEHHLLEX</sequence>
<proteinExistence type="evidence at protein level"/>
<comment type="subcellular location">
    <subcellularLocation>
        <location evidence="2">Secreted</location>
    </subcellularLocation>
</comment>
<comment type="tissue specificity">
    <text evidence="2">Expressed by the venom duct.</text>
</comment>
<comment type="miscellaneous">
    <text evidence="4">The mature peptide does not contain cysteine residues.</text>
</comment>
<organism>
    <name type="scientific">Conus regius</name>
    <name type="common">Crown cone</name>
    <dbReference type="NCBI Taxonomy" id="101314"/>
    <lineage>
        <taxon>Eukaryota</taxon>
        <taxon>Metazoa</taxon>
        <taxon>Spiralia</taxon>
        <taxon>Lophotrochozoa</taxon>
        <taxon>Mollusca</taxon>
        <taxon>Gastropoda</taxon>
        <taxon>Caenogastropoda</taxon>
        <taxon>Neogastropoda</taxon>
        <taxon>Conoidea</taxon>
        <taxon>Conidae</taxon>
        <taxon>Conus</taxon>
        <taxon>Stephanoconus</taxon>
    </lineage>
</organism>
<dbReference type="GO" id="GO:0005576">
    <property type="term" value="C:extracellular region"/>
    <property type="evidence" value="ECO:0007669"/>
    <property type="project" value="UniProtKB-SubCell"/>
</dbReference>
<feature type="peptide" id="PRO_0000439370" description="Conotoxin reg6(gamma)" evidence="2">
    <location>
        <begin position="1"/>
        <end position="26"/>
    </location>
</feature>
<feature type="region of interest" description="Disordered" evidence="1">
    <location>
        <begin position="1"/>
        <end position="26"/>
    </location>
</feature>
<feature type="compositionally biased region" description="Acidic residues" evidence="1">
    <location>
        <begin position="1"/>
        <end position="12"/>
    </location>
</feature>
<feature type="modified residue" description="4-carboxyglutamate" evidence="2">
    <location>
        <position position="4"/>
    </location>
</feature>
<feature type="modified residue" description="4-hydroxyproline" evidence="2">
    <location>
        <position position="5"/>
    </location>
</feature>
<feature type="modified residue" description="4-carboxyglutamate" evidence="2">
    <location>
        <position position="8"/>
    </location>
</feature>
<feature type="modified residue" description="4-hydroxyproline" evidence="2">
    <location>
        <position position="10"/>
    </location>
</feature>
<feature type="modified residue" description="4-carboxyglutamate" evidence="2">
    <location>
        <position position="14"/>
    </location>
</feature>
<feature type="modified residue" description="4-hydroxyproline" evidence="2">
    <location>
        <position position="15"/>
    </location>
</feature>
<feature type="modified residue" description="4-carboxyglutamate" evidence="2">
    <location>
        <position position="18"/>
    </location>
</feature>
<feature type="modified residue" description="4-carboxyglutamate" evidence="2">
    <location>
        <position position="20"/>
    </location>
</feature>
<feature type="modified residue" description="4-carboxyglutamate" evidence="2">
    <location>
        <position position="25"/>
    </location>
</feature>
<accession>P0DOZ3</accession>
<evidence type="ECO:0000256" key="1">
    <source>
        <dbReference type="SAM" id="MobiDB-lite"/>
    </source>
</evidence>
<evidence type="ECO:0000269" key="2">
    <source>
    </source>
</evidence>
<evidence type="ECO:0000303" key="3">
    <source>
    </source>
</evidence>
<evidence type="ECO:0000305" key="4"/>
<reference key="1">
    <citation type="journal article" date="2006" name="Prog. Mol. Subcell. Biol.">
        <title>Hyperhydroxylation: a new strategy for neuronal targeting by venomous marine molluscs.</title>
        <authorList>
            <person name="Franco A."/>
            <person name="Pisarewicz K."/>
            <person name="Moller C."/>
            <person name="Mora D."/>
            <person name="Fields G.B."/>
            <person name="Mari F."/>
        </authorList>
    </citation>
    <scope>PROTEIN SEQUENCE</scope>
    <scope>SUBCELLULAR LOCATION</scope>
    <scope>GAMMA-CARBOXYGLUTAMATION AT GLU-4; GLU-8; GLU-14; GLU-18; GLU-20 AND GLU-25</scope>
    <scope>HYDROXYLATION AT PRO-5; PRO-10 AND PRO-15</scope>
    <scope>TISSUE SPECIFICITY</scope>
    <source>
        <tissue>Venom</tissue>
    </source>
</reference>